<sequence>MSTMREMYPKNGRVILHVDMNCFFASVEIAHDPSLQGKPLAVAGNEKERKGIIITCSYEAREYGIRTTMPLWEAKRLCPQLVVRRPNFTLYREASFQMFQVLSRFTEKIQPVSIDEGYLDITDCYALGSPLEIAKMIQQALLTELQLPCSIGIAPNLFLAKTASDMKKPLGITVLRKRDIPEMIWPLSVEAMHGIGEKTAEKLNEIHIHTIEQLAKGDEHIIRAKIGKHGIDLQKRAKGTDDREVDPSQMGQHKSVGNSMTFSKDMDEEKELLDMLERLSKSVSKRLQKRTLVSYNIQIMIKYHDRRTVTRSKQLKNAIWEERDIFQAASRLWKQHWDGDSVRLLGVTATEIEWKTESVKQLDLFSFEEDAKKEPLLAVIDQINDKYGTPILQRGSQLLRKQEKSFQQKLENKFM</sequence>
<comment type="function">
    <text evidence="1">Poorly processive, error-prone DNA polymerase involved in untargeted mutagenesis. Copies undamaged DNA at stalled replication forks, which arise in vivo from mismatched or misaligned primer ends. These misaligned primers can be extended by PolIV. Exhibits no 3'-5' exonuclease (proofreading) activity. May be involved in translesional synthesis, in conjunction with the beta clamp from PolIII.</text>
</comment>
<comment type="catalytic activity">
    <reaction evidence="1">
        <text>DNA(n) + a 2'-deoxyribonucleoside 5'-triphosphate = DNA(n+1) + diphosphate</text>
        <dbReference type="Rhea" id="RHEA:22508"/>
        <dbReference type="Rhea" id="RHEA-COMP:17339"/>
        <dbReference type="Rhea" id="RHEA-COMP:17340"/>
        <dbReference type="ChEBI" id="CHEBI:33019"/>
        <dbReference type="ChEBI" id="CHEBI:61560"/>
        <dbReference type="ChEBI" id="CHEBI:173112"/>
        <dbReference type="EC" id="2.7.7.7"/>
    </reaction>
</comment>
<comment type="cofactor">
    <cofactor evidence="1">
        <name>Mg(2+)</name>
        <dbReference type="ChEBI" id="CHEBI:18420"/>
    </cofactor>
    <text evidence="1">Binds 2 magnesium ions per subunit.</text>
</comment>
<comment type="subunit">
    <text evidence="1">Monomer.</text>
</comment>
<comment type="subcellular location">
    <subcellularLocation>
        <location evidence="1">Cytoplasm</location>
    </subcellularLocation>
</comment>
<comment type="similarity">
    <text evidence="1">Belongs to the DNA polymerase type-Y family.</text>
</comment>
<name>DPO4_BACCR</name>
<feature type="chain" id="PRO_0000173900" description="DNA polymerase IV">
    <location>
        <begin position="1"/>
        <end position="415"/>
    </location>
</feature>
<feature type="domain" description="UmuC" evidence="1">
    <location>
        <begin position="15"/>
        <end position="196"/>
    </location>
</feature>
<feature type="region of interest" description="Disordered" evidence="2">
    <location>
        <begin position="235"/>
        <end position="260"/>
    </location>
</feature>
<feature type="compositionally biased region" description="Basic and acidic residues" evidence="2">
    <location>
        <begin position="235"/>
        <end position="246"/>
    </location>
</feature>
<feature type="compositionally biased region" description="Polar residues" evidence="2">
    <location>
        <begin position="249"/>
        <end position="260"/>
    </location>
</feature>
<feature type="active site" evidence="1">
    <location>
        <position position="116"/>
    </location>
</feature>
<feature type="binding site" evidence="1">
    <location>
        <position position="19"/>
    </location>
    <ligand>
        <name>Mg(2+)</name>
        <dbReference type="ChEBI" id="CHEBI:18420"/>
    </ligand>
</feature>
<feature type="binding site" evidence="1">
    <location>
        <position position="115"/>
    </location>
    <ligand>
        <name>Mg(2+)</name>
        <dbReference type="ChEBI" id="CHEBI:18420"/>
    </ligand>
</feature>
<feature type="site" description="Substrate discrimination" evidence="1">
    <location>
        <position position="24"/>
    </location>
</feature>
<dbReference type="EC" id="2.7.7.7" evidence="1"/>
<dbReference type="EMBL" id="AE016877">
    <property type="protein sequence ID" value="AAP11058.1"/>
    <property type="molecule type" value="Genomic_DNA"/>
</dbReference>
<dbReference type="SMR" id="Q818U9"/>
<dbReference type="STRING" id="226900.BC_4142"/>
<dbReference type="KEGG" id="bce:BC4142"/>
<dbReference type="HOGENOM" id="CLU_012348_1_1_9"/>
<dbReference type="Proteomes" id="UP000001417">
    <property type="component" value="Chromosome"/>
</dbReference>
<dbReference type="GO" id="GO:0005737">
    <property type="term" value="C:cytoplasm"/>
    <property type="evidence" value="ECO:0007669"/>
    <property type="project" value="UniProtKB-SubCell"/>
</dbReference>
<dbReference type="GO" id="GO:0003684">
    <property type="term" value="F:damaged DNA binding"/>
    <property type="evidence" value="ECO:0007669"/>
    <property type="project" value="InterPro"/>
</dbReference>
<dbReference type="GO" id="GO:0003887">
    <property type="term" value="F:DNA-directed DNA polymerase activity"/>
    <property type="evidence" value="ECO:0000318"/>
    <property type="project" value="GO_Central"/>
</dbReference>
<dbReference type="GO" id="GO:0000287">
    <property type="term" value="F:magnesium ion binding"/>
    <property type="evidence" value="ECO:0007669"/>
    <property type="project" value="UniProtKB-UniRule"/>
</dbReference>
<dbReference type="GO" id="GO:0006261">
    <property type="term" value="P:DNA-templated DNA replication"/>
    <property type="evidence" value="ECO:0007669"/>
    <property type="project" value="UniProtKB-UniRule"/>
</dbReference>
<dbReference type="GO" id="GO:0042276">
    <property type="term" value="P:error-prone translesion synthesis"/>
    <property type="evidence" value="ECO:0000318"/>
    <property type="project" value="GO_Central"/>
</dbReference>
<dbReference type="GO" id="GO:0009432">
    <property type="term" value="P:SOS response"/>
    <property type="evidence" value="ECO:0000318"/>
    <property type="project" value="GO_Central"/>
</dbReference>
<dbReference type="CDD" id="cd03586">
    <property type="entry name" value="PolY_Pol_IV_kappa"/>
    <property type="match status" value="1"/>
</dbReference>
<dbReference type="FunFam" id="1.10.150.20:FF:000061">
    <property type="entry name" value="DNA polymerase IV"/>
    <property type="match status" value="1"/>
</dbReference>
<dbReference type="FunFam" id="3.30.1490.100:FF:000012">
    <property type="entry name" value="DNA polymerase IV"/>
    <property type="match status" value="1"/>
</dbReference>
<dbReference type="FunFam" id="3.40.1170.60:FF:000001">
    <property type="entry name" value="DNA polymerase IV"/>
    <property type="match status" value="1"/>
</dbReference>
<dbReference type="Gene3D" id="3.30.70.270">
    <property type="match status" value="1"/>
</dbReference>
<dbReference type="Gene3D" id="3.40.1170.60">
    <property type="match status" value="1"/>
</dbReference>
<dbReference type="Gene3D" id="1.10.150.20">
    <property type="entry name" value="5' to 3' exonuclease, C-terminal subdomain"/>
    <property type="match status" value="1"/>
</dbReference>
<dbReference type="Gene3D" id="3.30.1490.100">
    <property type="entry name" value="DNA polymerase, Y-family, little finger domain"/>
    <property type="match status" value="1"/>
</dbReference>
<dbReference type="HAMAP" id="MF_01113">
    <property type="entry name" value="DNApol_IV"/>
    <property type="match status" value="1"/>
</dbReference>
<dbReference type="InterPro" id="IPR043502">
    <property type="entry name" value="DNA/RNA_pol_sf"/>
</dbReference>
<dbReference type="InterPro" id="IPR036775">
    <property type="entry name" value="DNA_pol_Y-fam_lit_finger_sf"/>
</dbReference>
<dbReference type="InterPro" id="IPR017961">
    <property type="entry name" value="DNA_pol_Y-fam_little_finger"/>
</dbReference>
<dbReference type="InterPro" id="IPR050116">
    <property type="entry name" value="DNA_polymerase-Y"/>
</dbReference>
<dbReference type="InterPro" id="IPR022880">
    <property type="entry name" value="DNApol_IV"/>
</dbReference>
<dbReference type="InterPro" id="IPR024728">
    <property type="entry name" value="PolY_HhH_motif"/>
</dbReference>
<dbReference type="InterPro" id="IPR043128">
    <property type="entry name" value="Rev_trsase/Diguanyl_cyclase"/>
</dbReference>
<dbReference type="InterPro" id="IPR001126">
    <property type="entry name" value="UmuC"/>
</dbReference>
<dbReference type="NCBIfam" id="NF002492">
    <property type="entry name" value="PRK01810.1"/>
    <property type="match status" value="1"/>
</dbReference>
<dbReference type="NCBIfam" id="NF002677">
    <property type="entry name" value="PRK02406.1"/>
    <property type="match status" value="1"/>
</dbReference>
<dbReference type="PANTHER" id="PTHR11076:SF33">
    <property type="entry name" value="DNA POLYMERASE KAPPA"/>
    <property type="match status" value="1"/>
</dbReference>
<dbReference type="PANTHER" id="PTHR11076">
    <property type="entry name" value="DNA REPAIR POLYMERASE UMUC / TRANSFERASE FAMILY MEMBER"/>
    <property type="match status" value="1"/>
</dbReference>
<dbReference type="Pfam" id="PF00817">
    <property type="entry name" value="IMS"/>
    <property type="match status" value="1"/>
</dbReference>
<dbReference type="Pfam" id="PF11799">
    <property type="entry name" value="IMS_C"/>
    <property type="match status" value="1"/>
</dbReference>
<dbReference type="Pfam" id="PF11798">
    <property type="entry name" value="IMS_HHH"/>
    <property type="match status" value="1"/>
</dbReference>
<dbReference type="SUPFAM" id="SSF56672">
    <property type="entry name" value="DNA/RNA polymerases"/>
    <property type="match status" value="1"/>
</dbReference>
<dbReference type="SUPFAM" id="SSF100879">
    <property type="entry name" value="Lesion bypass DNA polymerase (Y-family), little finger domain"/>
    <property type="match status" value="1"/>
</dbReference>
<dbReference type="PROSITE" id="PS50173">
    <property type="entry name" value="UMUC"/>
    <property type="match status" value="1"/>
</dbReference>
<organism>
    <name type="scientific">Bacillus cereus (strain ATCC 14579 / DSM 31 / CCUG 7414 / JCM 2152 / NBRC 15305 / NCIMB 9373 / NCTC 2599 / NRRL B-3711)</name>
    <dbReference type="NCBI Taxonomy" id="226900"/>
    <lineage>
        <taxon>Bacteria</taxon>
        <taxon>Bacillati</taxon>
        <taxon>Bacillota</taxon>
        <taxon>Bacilli</taxon>
        <taxon>Bacillales</taxon>
        <taxon>Bacillaceae</taxon>
        <taxon>Bacillus</taxon>
        <taxon>Bacillus cereus group</taxon>
    </lineage>
</organism>
<protein>
    <recommendedName>
        <fullName evidence="1">DNA polymerase IV</fullName>
        <shortName evidence="1">Pol IV</shortName>
        <ecNumber evidence="1">2.7.7.7</ecNumber>
    </recommendedName>
</protein>
<accession>Q818U9</accession>
<proteinExistence type="inferred from homology"/>
<evidence type="ECO:0000255" key="1">
    <source>
        <dbReference type="HAMAP-Rule" id="MF_01113"/>
    </source>
</evidence>
<evidence type="ECO:0000256" key="2">
    <source>
        <dbReference type="SAM" id="MobiDB-lite"/>
    </source>
</evidence>
<keyword id="KW-0963">Cytoplasm</keyword>
<keyword id="KW-0227">DNA damage</keyword>
<keyword id="KW-0234">DNA repair</keyword>
<keyword id="KW-0235">DNA replication</keyword>
<keyword id="KW-0238">DNA-binding</keyword>
<keyword id="KW-0239">DNA-directed DNA polymerase</keyword>
<keyword id="KW-0460">Magnesium</keyword>
<keyword id="KW-0479">Metal-binding</keyword>
<keyword id="KW-0515">Mutator protein</keyword>
<keyword id="KW-0548">Nucleotidyltransferase</keyword>
<keyword id="KW-1185">Reference proteome</keyword>
<keyword id="KW-0808">Transferase</keyword>
<gene>
    <name evidence="1" type="primary">dinB</name>
    <name type="ordered locus">BC_4142</name>
</gene>
<reference key="1">
    <citation type="journal article" date="2003" name="Nature">
        <title>Genome sequence of Bacillus cereus and comparative analysis with Bacillus anthracis.</title>
        <authorList>
            <person name="Ivanova N."/>
            <person name="Sorokin A."/>
            <person name="Anderson I."/>
            <person name="Galleron N."/>
            <person name="Candelon B."/>
            <person name="Kapatral V."/>
            <person name="Bhattacharyya A."/>
            <person name="Reznik G."/>
            <person name="Mikhailova N."/>
            <person name="Lapidus A."/>
            <person name="Chu L."/>
            <person name="Mazur M."/>
            <person name="Goltsman E."/>
            <person name="Larsen N."/>
            <person name="D'Souza M."/>
            <person name="Walunas T."/>
            <person name="Grechkin Y."/>
            <person name="Pusch G."/>
            <person name="Haselkorn R."/>
            <person name="Fonstein M."/>
            <person name="Ehrlich S.D."/>
            <person name="Overbeek R."/>
            <person name="Kyrpides N.C."/>
        </authorList>
    </citation>
    <scope>NUCLEOTIDE SEQUENCE [LARGE SCALE GENOMIC DNA]</scope>
    <source>
        <strain>ATCC 14579 / DSM 31 / CCUG 7414 / JCM 2152 / NBRC 15305 / NCIMB 9373 / NCTC 2599 / NRRL B-3711</strain>
    </source>
</reference>